<reference key="1">
    <citation type="journal article" date="2002" name="Nucleic Acids Res.">
        <title>Genome sequence of Shigella flexneri 2a: insights into pathogenicity through comparison with genomes of Escherichia coli K12 and O157.</title>
        <authorList>
            <person name="Jin Q."/>
            <person name="Yuan Z."/>
            <person name="Xu J."/>
            <person name="Wang Y."/>
            <person name="Shen Y."/>
            <person name="Lu W."/>
            <person name="Wang J."/>
            <person name="Liu H."/>
            <person name="Yang J."/>
            <person name="Yang F."/>
            <person name="Zhang X."/>
            <person name="Zhang J."/>
            <person name="Yang G."/>
            <person name="Wu H."/>
            <person name="Qu D."/>
            <person name="Dong J."/>
            <person name="Sun L."/>
            <person name="Xue Y."/>
            <person name="Zhao A."/>
            <person name="Gao Y."/>
            <person name="Zhu J."/>
            <person name="Kan B."/>
            <person name="Ding K."/>
            <person name="Chen S."/>
            <person name="Cheng H."/>
            <person name="Yao Z."/>
            <person name="He B."/>
            <person name="Chen R."/>
            <person name="Ma D."/>
            <person name="Qiang B."/>
            <person name="Wen Y."/>
            <person name="Hou Y."/>
            <person name="Yu J."/>
        </authorList>
    </citation>
    <scope>NUCLEOTIDE SEQUENCE [LARGE SCALE GENOMIC DNA]</scope>
    <source>
        <strain>301 / Serotype 2a</strain>
    </source>
</reference>
<name>EMTAL_SHIFL</name>
<protein>
    <recommendedName>
        <fullName evidence="1">Endo-type membrane-bound lytic murein transglycosylase A-like protein</fullName>
        <ecNumber evidence="1">4.2.2.n2</ecNumber>
    </recommendedName>
    <alternativeName>
        <fullName evidence="1">Peptidoglycan lytic endotransglycosylase</fullName>
    </alternativeName>
</protein>
<keyword id="KW-0961">Cell wall biogenesis/degradation</keyword>
<keyword id="KW-0456">Lyase</keyword>
<keyword id="KW-1185">Reference proteome</keyword>
<sequence>MPVVTLTGIPGYTGLRIEIDMVCLFDWLLAGCSSKHDYTNPPWNAKVPVQRAMQWMPISQKAGAAWGVDPQLITAIIAIESGGNPNAVSKSNAIGLMQLKASTSGRDVYRRMGWSGEPTTSELKNPERNISMGAAYLNILETGPLAGIEDPKVLQYALVVSYANGAGALLRTFSSDRKKAISKINDLDADEFLDHVARNHPAPQAPRYIYKLEQALDAM</sequence>
<dbReference type="EC" id="4.2.2.n2" evidence="1"/>
<dbReference type="EMBL" id="AE005674">
    <property type="protein sequence ID" value="AAN42798.1"/>
    <property type="molecule type" value="Genomic_DNA"/>
</dbReference>
<dbReference type="RefSeq" id="NP_707091.1">
    <property type="nucleotide sequence ID" value="NC_004337.2"/>
</dbReference>
<dbReference type="SMR" id="Q83RQ0"/>
<dbReference type="STRING" id="198214.SF1183"/>
<dbReference type="PaxDb" id="198214-SF1183"/>
<dbReference type="GeneID" id="1024114"/>
<dbReference type="KEGG" id="sfl:SF1183"/>
<dbReference type="PATRIC" id="fig|198214.7.peg.1398"/>
<dbReference type="HOGENOM" id="CLU_103257_0_0_6"/>
<dbReference type="Proteomes" id="UP000001006">
    <property type="component" value="Chromosome"/>
</dbReference>
<dbReference type="GO" id="GO:0009279">
    <property type="term" value="C:cell outer membrane"/>
    <property type="evidence" value="ECO:0007669"/>
    <property type="project" value="UniProtKB-UniRule"/>
</dbReference>
<dbReference type="GO" id="GO:0008932">
    <property type="term" value="F:lytic endotransglycosylase activity"/>
    <property type="evidence" value="ECO:0007669"/>
    <property type="project" value="InterPro"/>
</dbReference>
<dbReference type="GO" id="GO:0016998">
    <property type="term" value="P:cell wall macromolecule catabolic process"/>
    <property type="evidence" value="ECO:0007669"/>
    <property type="project" value="UniProtKB-UniRule"/>
</dbReference>
<dbReference type="GO" id="GO:0071555">
    <property type="term" value="P:cell wall organization"/>
    <property type="evidence" value="ECO:0007669"/>
    <property type="project" value="UniProtKB-KW"/>
</dbReference>
<dbReference type="GO" id="GO:0000270">
    <property type="term" value="P:peptidoglycan metabolic process"/>
    <property type="evidence" value="ECO:0007669"/>
    <property type="project" value="InterPro"/>
</dbReference>
<dbReference type="CDD" id="cd16893">
    <property type="entry name" value="LT_MltC_MltE"/>
    <property type="match status" value="1"/>
</dbReference>
<dbReference type="FunFam" id="1.10.530.10:FF:000007">
    <property type="entry name" value="Endo-type membrane-bound lytic murein transglycosylase A"/>
    <property type="match status" value="1"/>
</dbReference>
<dbReference type="Gene3D" id="1.10.530.10">
    <property type="match status" value="1"/>
</dbReference>
<dbReference type="HAMAP" id="MF_01381">
    <property type="entry name" value="EmtA"/>
    <property type="match status" value="1"/>
</dbReference>
<dbReference type="InterPro" id="IPR023946">
    <property type="entry name" value="EmtA"/>
</dbReference>
<dbReference type="InterPro" id="IPR023346">
    <property type="entry name" value="Lysozyme-like_dom_sf"/>
</dbReference>
<dbReference type="InterPro" id="IPR000189">
    <property type="entry name" value="Transglyc_AS"/>
</dbReference>
<dbReference type="InterPro" id="IPR008258">
    <property type="entry name" value="Transglycosylase_SLT_dom_1"/>
</dbReference>
<dbReference type="NCBIfam" id="NF012014">
    <property type="entry name" value="PRK15470.1"/>
    <property type="match status" value="1"/>
</dbReference>
<dbReference type="PANTHER" id="PTHR37423:SF4">
    <property type="entry name" value="ENDO-TYPE MEMBRANE-BOUND LYTIC MUREIN TRANSGLYCOSYLASE A"/>
    <property type="match status" value="1"/>
</dbReference>
<dbReference type="PANTHER" id="PTHR37423">
    <property type="entry name" value="SOLUBLE LYTIC MUREIN TRANSGLYCOSYLASE-RELATED"/>
    <property type="match status" value="1"/>
</dbReference>
<dbReference type="Pfam" id="PF01464">
    <property type="entry name" value="SLT"/>
    <property type="match status" value="1"/>
</dbReference>
<dbReference type="SUPFAM" id="SSF53955">
    <property type="entry name" value="Lysozyme-like"/>
    <property type="match status" value="1"/>
</dbReference>
<dbReference type="PROSITE" id="PS00922">
    <property type="entry name" value="TRANSGLYCOSYLASE"/>
    <property type="match status" value="1"/>
</dbReference>
<proteinExistence type="inferred from homology"/>
<evidence type="ECO:0000255" key="1">
    <source>
        <dbReference type="HAMAP-Rule" id="MF_01381"/>
    </source>
</evidence>
<evidence type="ECO:0000305" key="2"/>
<organism>
    <name type="scientific">Shigella flexneri</name>
    <dbReference type="NCBI Taxonomy" id="623"/>
    <lineage>
        <taxon>Bacteria</taxon>
        <taxon>Pseudomonadati</taxon>
        <taxon>Pseudomonadota</taxon>
        <taxon>Gammaproteobacteria</taxon>
        <taxon>Enterobacterales</taxon>
        <taxon>Enterobacteriaceae</taxon>
        <taxon>Shigella</taxon>
    </lineage>
</organism>
<accession>Q83RQ0</accession>
<feature type="chain" id="PRO_0000312917" description="Endo-type membrane-bound lytic murein transglycosylase A-like protein">
    <location>
        <begin position="1"/>
        <end position="219"/>
    </location>
</feature>
<comment type="function">
    <text evidence="2">Murein-degrading enzyme. May play a role in recycling of muropeptides during cell elongation and/or cell division (Potential).</text>
</comment>
<comment type="catalytic activity">
    <reaction evidence="1">
        <text>Endolytic cleavage of the (1-&gt;4)-beta-glycosidic linkage between N-acetylmuramic acid (MurNAc) and N-acetylglucosamine (GlcNAc) residues in peptidoglycan with concomitant formation of a 1,6-anhydrobond in the MurNAc residue.</text>
        <dbReference type="EC" id="4.2.2.n2"/>
    </reaction>
</comment>
<comment type="similarity">
    <text evidence="1">Belongs to the transglycosylase Slt family.</text>
</comment>
<gene>
    <name evidence="1" type="primary">emtA2</name>
    <name type="synonym">mltE</name>
    <name type="ordered locus">SF1183</name>
</gene>